<name>NBLIK_STRGG</name>
<proteinExistence type="inferred from homology"/>
<sequence>MIEIPSDLHPDLVPLAFLLGNWAGAGVSDFPGAEKCNFGQEVTFSHDGRDFLEYVSHTWVLDDEGKQVRPLETETGYWRIDKDRKVEVVMARDQGVIEIWYGELADQKPQIDLVTDAVARTAASGPYSGGKRLYGYVKSDLMWVGEKATPEVELRPYMSAHLKKVVTPEEVAEMARNLPDMPDDGIAFFK</sequence>
<evidence type="ECO:0000255" key="1">
    <source>
        <dbReference type="HAMAP-Rule" id="MF_01297"/>
    </source>
</evidence>
<evidence type="ECO:0000305" key="2"/>
<protein>
    <recommendedName>
        <fullName evidence="2">Ferric nitrobindin-like protein</fullName>
    </recommendedName>
</protein>
<dbReference type="EMBL" id="AP009493">
    <property type="protein sequence ID" value="BAG20799.1"/>
    <property type="molecule type" value="Genomic_DNA"/>
</dbReference>
<dbReference type="RefSeq" id="WP_003968141.1">
    <property type="nucleotide sequence ID" value="NC_010572.1"/>
</dbReference>
<dbReference type="SMR" id="B1VS45"/>
<dbReference type="KEGG" id="sgr:SGR_3970"/>
<dbReference type="eggNOG" id="COG3485">
    <property type="taxonomic scope" value="Bacteria"/>
</dbReference>
<dbReference type="HOGENOM" id="CLU_085483_0_0_11"/>
<dbReference type="Proteomes" id="UP000001685">
    <property type="component" value="Chromosome"/>
</dbReference>
<dbReference type="CDD" id="cd07828">
    <property type="entry name" value="lipocalin_heme-bd-THAP4-like"/>
    <property type="match status" value="1"/>
</dbReference>
<dbReference type="Gene3D" id="2.40.128.20">
    <property type="match status" value="1"/>
</dbReference>
<dbReference type="HAMAP" id="MF_01297">
    <property type="entry name" value="nitrobindin"/>
    <property type="match status" value="1"/>
</dbReference>
<dbReference type="InterPro" id="IPR012674">
    <property type="entry name" value="Calycin"/>
</dbReference>
<dbReference type="InterPro" id="IPR022939">
    <property type="entry name" value="Nb(III)_bact/plant"/>
</dbReference>
<dbReference type="InterPro" id="IPR045165">
    <property type="entry name" value="Nitrobindin"/>
</dbReference>
<dbReference type="InterPro" id="IPR014878">
    <property type="entry name" value="THAP4-like_heme-bd"/>
</dbReference>
<dbReference type="PANTHER" id="PTHR15854:SF4">
    <property type="entry name" value="PEROXYNITRITE ISOMERASE THAP4"/>
    <property type="match status" value="1"/>
</dbReference>
<dbReference type="PANTHER" id="PTHR15854">
    <property type="entry name" value="THAP4 PROTEIN"/>
    <property type="match status" value="1"/>
</dbReference>
<dbReference type="Pfam" id="PF08768">
    <property type="entry name" value="THAP4_heme-bd"/>
    <property type="match status" value="1"/>
</dbReference>
<dbReference type="SUPFAM" id="SSF50814">
    <property type="entry name" value="Lipocalins"/>
    <property type="match status" value="1"/>
</dbReference>
<feature type="chain" id="PRO_0000356955" description="Ferric nitrobindin-like protein">
    <location>
        <begin position="1"/>
        <end position="190"/>
    </location>
</feature>
<feature type="short sequence motif" description="GXWXGXG" evidence="1">
    <location>
        <begin position="20"/>
        <end position="26"/>
    </location>
</feature>
<organism>
    <name type="scientific">Streptomyces griseus subsp. griseus (strain JCM 4626 / CBS 651.72 / NBRC 13350 / KCC S-0626 / ISP 5235)</name>
    <dbReference type="NCBI Taxonomy" id="455632"/>
    <lineage>
        <taxon>Bacteria</taxon>
        <taxon>Bacillati</taxon>
        <taxon>Actinomycetota</taxon>
        <taxon>Actinomycetes</taxon>
        <taxon>Kitasatosporales</taxon>
        <taxon>Streptomycetaceae</taxon>
        <taxon>Streptomyces</taxon>
    </lineage>
</organism>
<comment type="similarity">
    <text evidence="1">Belongs to the nitrobindin family.</text>
</comment>
<comment type="caution">
    <text evidence="2">Lacks the conserved His residue that binds heme iron in the nitrobindin family.</text>
</comment>
<accession>B1VS45</accession>
<gene>
    <name type="ordered locus">SGR_3970</name>
</gene>
<reference key="1">
    <citation type="journal article" date="2008" name="J. Bacteriol.">
        <title>Genome sequence of the streptomycin-producing microorganism Streptomyces griseus IFO 13350.</title>
        <authorList>
            <person name="Ohnishi Y."/>
            <person name="Ishikawa J."/>
            <person name="Hara H."/>
            <person name="Suzuki H."/>
            <person name="Ikenoya M."/>
            <person name="Ikeda H."/>
            <person name="Yamashita A."/>
            <person name="Hattori M."/>
            <person name="Horinouchi S."/>
        </authorList>
    </citation>
    <scope>NUCLEOTIDE SEQUENCE [LARGE SCALE GENOMIC DNA]</scope>
    <source>
        <strain>JCM 4626 / CBS 651.72 / NBRC 13350 / KCC S-0626 / ISP 5235</strain>
    </source>
</reference>